<sequence>MAHKKAGGSSRNGRDSESKRLGVKRYAGQEVISGNIIIRQRGTQFYPGANVGIGKDHTLFATAEGVVKFERKGPRQVRTVSVVSAA</sequence>
<gene>
    <name evidence="1" type="primary">rpmA</name>
    <name type="ordered locus">Lferr_0461</name>
</gene>
<dbReference type="EMBL" id="CP001132">
    <property type="protein sequence ID" value="ACH82715.1"/>
    <property type="molecule type" value="Genomic_DNA"/>
</dbReference>
<dbReference type="RefSeq" id="WP_009565803.1">
    <property type="nucleotide sequence ID" value="NC_011206.1"/>
</dbReference>
<dbReference type="SMR" id="B5ELU3"/>
<dbReference type="GeneID" id="89663841"/>
<dbReference type="KEGG" id="afe:Lferr_0461"/>
<dbReference type="eggNOG" id="COG0211">
    <property type="taxonomic scope" value="Bacteria"/>
</dbReference>
<dbReference type="HOGENOM" id="CLU_095424_4_1_6"/>
<dbReference type="GO" id="GO:0022625">
    <property type="term" value="C:cytosolic large ribosomal subunit"/>
    <property type="evidence" value="ECO:0007669"/>
    <property type="project" value="TreeGrafter"/>
</dbReference>
<dbReference type="GO" id="GO:0003735">
    <property type="term" value="F:structural constituent of ribosome"/>
    <property type="evidence" value="ECO:0007669"/>
    <property type="project" value="InterPro"/>
</dbReference>
<dbReference type="GO" id="GO:0006412">
    <property type="term" value="P:translation"/>
    <property type="evidence" value="ECO:0007669"/>
    <property type="project" value="UniProtKB-UniRule"/>
</dbReference>
<dbReference type="FunFam" id="2.40.50.100:FF:000004">
    <property type="entry name" value="50S ribosomal protein L27"/>
    <property type="match status" value="1"/>
</dbReference>
<dbReference type="Gene3D" id="2.40.50.100">
    <property type="match status" value="1"/>
</dbReference>
<dbReference type="HAMAP" id="MF_00539">
    <property type="entry name" value="Ribosomal_bL27"/>
    <property type="match status" value="1"/>
</dbReference>
<dbReference type="InterPro" id="IPR001684">
    <property type="entry name" value="Ribosomal_bL27"/>
</dbReference>
<dbReference type="InterPro" id="IPR018261">
    <property type="entry name" value="Ribosomal_bL27_CS"/>
</dbReference>
<dbReference type="NCBIfam" id="TIGR00062">
    <property type="entry name" value="L27"/>
    <property type="match status" value="1"/>
</dbReference>
<dbReference type="PANTHER" id="PTHR15893:SF0">
    <property type="entry name" value="LARGE RIBOSOMAL SUBUNIT PROTEIN BL27M"/>
    <property type="match status" value="1"/>
</dbReference>
<dbReference type="PANTHER" id="PTHR15893">
    <property type="entry name" value="RIBOSOMAL PROTEIN L27"/>
    <property type="match status" value="1"/>
</dbReference>
<dbReference type="Pfam" id="PF01016">
    <property type="entry name" value="Ribosomal_L27"/>
    <property type="match status" value="1"/>
</dbReference>
<dbReference type="PRINTS" id="PR00063">
    <property type="entry name" value="RIBOSOMALL27"/>
</dbReference>
<dbReference type="SUPFAM" id="SSF110324">
    <property type="entry name" value="Ribosomal L27 protein-like"/>
    <property type="match status" value="1"/>
</dbReference>
<dbReference type="PROSITE" id="PS00831">
    <property type="entry name" value="RIBOSOMAL_L27"/>
    <property type="match status" value="1"/>
</dbReference>
<keyword id="KW-0687">Ribonucleoprotein</keyword>
<keyword id="KW-0689">Ribosomal protein</keyword>
<organism>
    <name type="scientific">Acidithiobacillus ferrooxidans (strain ATCC 53993 / BNL-5-31)</name>
    <name type="common">Leptospirillum ferrooxidans (ATCC 53993)</name>
    <dbReference type="NCBI Taxonomy" id="380394"/>
    <lineage>
        <taxon>Bacteria</taxon>
        <taxon>Pseudomonadati</taxon>
        <taxon>Pseudomonadota</taxon>
        <taxon>Acidithiobacillia</taxon>
        <taxon>Acidithiobacillales</taxon>
        <taxon>Acidithiobacillaceae</taxon>
        <taxon>Acidithiobacillus</taxon>
    </lineage>
</organism>
<name>RL27_ACIF5</name>
<evidence type="ECO:0000255" key="1">
    <source>
        <dbReference type="HAMAP-Rule" id="MF_00539"/>
    </source>
</evidence>
<evidence type="ECO:0000256" key="2">
    <source>
        <dbReference type="SAM" id="MobiDB-lite"/>
    </source>
</evidence>
<evidence type="ECO:0000305" key="3"/>
<protein>
    <recommendedName>
        <fullName evidence="1">Large ribosomal subunit protein bL27</fullName>
    </recommendedName>
    <alternativeName>
        <fullName evidence="3">50S ribosomal protein L27</fullName>
    </alternativeName>
</protein>
<accession>B5ELU3</accession>
<feature type="chain" id="PRO_1000128681" description="Large ribosomal subunit protein bL27">
    <location>
        <begin position="1"/>
        <end position="86"/>
    </location>
</feature>
<feature type="region of interest" description="Disordered" evidence="2">
    <location>
        <begin position="1"/>
        <end position="22"/>
    </location>
</feature>
<proteinExistence type="inferred from homology"/>
<reference key="1">
    <citation type="submission" date="2008-08" db="EMBL/GenBank/DDBJ databases">
        <title>Complete sequence of Acidithiobacillus ferrooxidans ATCC 53993.</title>
        <authorList>
            <person name="Lucas S."/>
            <person name="Copeland A."/>
            <person name="Lapidus A."/>
            <person name="Glavina del Rio T."/>
            <person name="Dalin E."/>
            <person name="Tice H."/>
            <person name="Bruce D."/>
            <person name="Goodwin L."/>
            <person name="Pitluck S."/>
            <person name="Sims D."/>
            <person name="Brettin T."/>
            <person name="Detter J.C."/>
            <person name="Han C."/>
            <person name="Kuske C.R."/>
            <person name="Larimer F."/>
            <person name="Land M."/>
            <person name="Hauser L."/>
            <person name="Kyrpides N."/>
            <person name="Lykidis A."/>
            <person name="Borole A.P."/>
        </authorList>
    </citation>
    <scope>NUCLEOTIDE SEQUENCE [LARGE SCALE GENOMIC DNA]</scope>
    <source>
        <strain>ATCC 53993 / BNL-5-31</strain>
    </source>
</reference>
<comment type="similarity">
    <text evidence="1">Belongs to the bacterial ribosomal protein bL27 family.</text>
</comment>